<keyword id="KW-0002">3D-structure</keyword>
<keyword id="KW-1015">Disulfide bond</keyword>
<keyword id="KW-0274">FAD</keyword>
<keyword id="KW-0285">Flavoprotein</keyword>
<keyword id="KW-0325">Glycoprotein</keyword>
<keyword id="KW-0547">Nucleotide-binding</keyword>
<keyword id="KW-0560">Oxidoreductase</keyword>
<keyword id="KW-1185">Reference proteome</keyword>
<keyword id="KW-0964">Secreted</keyword>
<keyword id="KW-0732">Signal</keyword>
<feature type="signal peptide" evidence="1">
    <location>
        <begin position="1"/>
        <end position="16"/>
    </location>
</feature>
<feature type="chain" id="PRO_5003436280" description="Xylooligosaccharide oxidase">
    <location>
        <begin position="17"/>
        <end position="497"/>
    </location>
</feature>
<feature type="domain" description="FAD-binding PCMH-type" evidence="3">
    <location>
        <begin position="57"/>
        <end position="230"/>
    </location>
</feature>
<feature type="binding site" evidence="4">
    <location>
        <position position="154"/>
    </location>
    <ligand>
        <name>substrate</name>
    </ligand>
</feature>
<feature type="binding site" evidence="4">
    <location>
        <position position="272"/>
    </location>
    <ligand>
        <name>substrate</name>
    </ligand>
</feature>
<feature type="binding site" evidence="4">
    <location>
        <position position="412"/>
    </location>
    <ligand>
        <name>substrate</name>
    </ligand>
</feature>
<feature type="binding site" evidence="4">
    <location>
        <position position="451"/>
    </location>
    <ligand>
        <name>substrate</name>
    </ligand>
</feature>
<feature type="glycosylation site" description="N-linked (GlcNAc...) asparagine" evidence="2">
    <location>
        <position position="42"/>
    </location>
</feature>
<feature type="glycosylation site" description="N-linked (GlcNAc...) asparagine" evidence="4 8 9 10">
    <location>
        <position position="117"/>
    </location>
</feature>
<feature type="glycosylation site" description="N-linked (GlcNAc...) asparagine" evidence="4 8 9 10">
    <location>
        <position position="192"/>
    </location>
</feature>
<feature type="glycosylation site" description="N-linked (GlcNAc...) asparagine" evidence="4 8 9 10">
    <location>
        <position position="233"/>
    </location>
</feature>
<feature type="glycosylation site" description="N-linked (GlcNAc...) asparagine" evidence="4 8 9 10">
    <location>
        <position position="245"/>
    </location>
</feature>
<feature type="glycosylation site" description="N-linked (GlcNAc...) asparagine" evidence="4 8 9 10">
    <location>
        <position position="289"/>
    </location>
</feature>
<feature type="glycosylation site" description="N-linked (GlcNAc...) asparagine" evidence="2">
    <location>
        <position position="307"/>
    </location>
</feature>
<feature type="disulfide bond" evidence="4 8 9 10">
    <location>
        <begin position="30"/>
        <end position="79"/>
    </location>
</feature>
<feature type="cross-link" description="6-(S-cysteinyl)-8alpha-(pros-histidyl)-FAD (His-Cys)" evidence="4">
    <location>
        <begin position="94"/>
        <end position="155"/>
    </location>
</feature>
<feature type="helix" evidence="11">
    <location>
        <begin position="26"/>
        <end position="33"/>
    </location>
</feature>
<feature type="helix" evidence="11">
    <location>
        <begin position="45"/>
        <end position="50"/>
    </location>
</feature>
<feature type="strand" evidence="11">
    <location>
        <begin position="62"/>
        <end position="65"/>
    </location>
</feature>
<feature type="helix" evidence="11">
    <location>
        <begin position="70"/>
        <end position="83"/>
    </location>
</feature>
<feature type="strand" evidence="11">
    <location>
        <begin position="87"/>
        <end position="92"/>
    </location>
</feature>
<feature type="helix" evidence="11">
    <location>
        <begin position="99"/>
        <end position="101"/>
    </location>
</feature>
<feature type="strand" evidence="11">
    <location>
        <begin position="103"/>
        <end position="106"/>
    </location>
</feature>
<feature type="strand" evidence="11">
    <location>
        <begin position="108"/>
        <end position="111"/>
    </location>
</feature>
<feature type="strand" evidence="11">
    <location>
        <begin position="118"/>
        <end position="120"/>
    </location>
</feature>
<feature type="turn" evidence="11">
    <location>
        <begin position="122"/>
        <end position="124"/>
    </location>
</feature>
<feature type="strand" evidence="11">
    <location>
        <begin position="127"/>
        <end position="129"/>
    </location>
</feature>
<feature type="helix" evidence="11">
    <location>
        <begin position="135"/>
        <end position="146"/>
    </location>
</feature>
<feature type="strand" evidence="11">
    <location>
        <begin position="147"/>
        <end position="149"/>
    </location>
</feature>
<feature type="helix" evidence="11">
    <location>
        <begin position="160"/>
        <end position="165"/>
    </location>
</feature>
<feature type="helix" evidence="11">
    <location>
        <begin position="173"/>
        <end position="176"/>
    </location>
</feature>
<feature type="helix" evidence="11">
    <location>
        <begin position="179"/>
        <end position="182"/>
    </location>
</feature>
<feature type="strand" evidence="11">
    <location>
        <begin position="183"/>
        <end position="189"/>
    </location>
</feature>
<feature type="strand" evidence="11">
    <location>
        <begin position="195"/>
        <end position="199"/>
    </location>
</feature>
<feature type="helix" evidence="11">
    <location>
        <begin position="204"/>
        <end position="213"/>
    </location>
</feature>
<feature type="helix" evidence="11">
    <location>
        <begin position="214"/>
        <end position="216"/>
    </location>
</feature>
<feature type="strand" evidence="11">
    <location>
        <begin position="219"/>
        <end position="225"/>
    </location>
</feature>
<feature type="strand" evidence="11">
    <location>
        <begin position="234"/>
        <end position="240"/>
    </location>
</feature>
<feature type="helix" evidence="11">
    <location>
        <begin position="246"/>
        <end position="261"/>
    </location>
</feature>
<feature type="strand" evidence="11">
    <location>
        <begin position="269"/>
        <end position="275"/>
    </location>
</feature>
<feature type="strand" evidence="11">
    <location>
        <begin position="280"/>
        <end position="288"/>
    </location>
</feature>
<feature type="helix" evidence="11">
    <location>
        <begin position="290"/>
        <end position="304"/>
    </location>
</feature>
<feature type="strand" evidence="11">
    <location>
        <begin position="308"/>
        <end position="314"/>
    </location>
</feature>
<feature type="helix" evidence="11">
    <location>
        <begin position="316"/>
        <end position="322"/>
    </location>
</feature>
<feature type="strand" evidence="11">
    <location>
        <begin position="340"/>
        <end position="349"/>
    </location>
</feature>
<feature type="helix" evidence="11">
    <location>
        <begin position="354"/>
        <end position="366"/>
    </location>
</feature>
<feature type="helix" evidence="11">
    <location>
        <begin position="368"/>
        <end position="370"/>
    </location>
</feature>
<feature type="strand" evidence="11">
    <location>
        <begin position="372"/>
        <end position="381"/>
    </location>
</feature>
<feature type="helix" evidence="11">
    <location>
        <begin position="389"/>
        <end position="391"/>
    </location>
</feature>
<feature type="turn" evidence="11">
    <location>
        <begin position="404"/>
        <end position="406"/>
    </location>
</feature>
<feature type="strand" evidence="11">
    <location>
        <begin position="409"/>
        <end position="420"/>
    </location>
</feature>
<feature type="turn" evidence="11">
    <location>
        <begin position="423"/>
        <end position="426"/>
    </location>
</feature>
<feature type="helix" evidence="11">
    <location>
        <begin position="427"/>
        <end position="437"/>
    </location>
</feature>
<feature type="helix" evidence="11">
    <location>
        <begin position="442"/>
        <end position="444"/>
    </location>
</feature>
<feature type="helix" evidence="11">
    <location>
        <begin position="449"/>
        <end position="451"/>
    </location>
</feature>
<feature type="helix" evidence="11">
    <location>
        <begin position="458"/>
        <end position="466"/>
    </location>
</feature>
<feature type="helix" evidence="11">
    <location>
        <begin position="467"/>
        <end position="469"/>
    </location>
</feature>
<feature type="helix" evidence="11">
    <location>
        <begin position="470"/>
        <end position="480"/>
    </location>
</feature>
<dbReference type="EC" id="1.1.3.-" evidence="7"/>
<dbReference type="EMBL" id="CP003005">
    <property type="protein sequence ID" value="AEO58513.1"/>
    <property type="molecule type" value="Genomic_DNA"/>
</dbReference>
<dbReference type="RefSeq" id="XP_003663758.1">
    <property type="nucleotide sequence ID" value="XM_003663710.1"/>
</dbReference>
<dbReference type="PDB" id="5K8E">
    <property type="method" value="X-ray"/>
    <property type="resolution" value="1.93 A"/>
    <property type="chains" value="A=1-497"/>
</dbReference>
<dbReference type="PDB" id="5L6F">
    <property type="method" value="X-ray"/>
    <property type="resolution" value="1.80 A"/>
    <property type="chains" value="A=1-497"/>
</dbReference>
<dbReference type="PDB" id="5L6G">
    <property type="method" value="X-ray"/>
    <property type="resolution" value="1.79 A"/>
    <property type="chains" value="A=1-497"/>
</dbReference>
<dbReference type="PDBsum" id="5K8E"/>
<dbReference type="PDBsum" id="5L6F"/>
<dbReference type="PDBsum" id="5L6G"/>
<dbReference type="SMR" id="G2QG48"/>
<dbReference type="STRING" id="573729.G2QG48"/>
<dbReference type="GlyCosmos" id="G2QG48">
    <property type="glycosylation" value="7 sites, No reported glycans"/>
</dbReference>
<dbReference type="iPTMnet" id="G2QG48"/>
<dbReference type="GeneID" id="11510048"/>
<dbReference type="KEGG" id="mtm:MYCTH_102971"/>
<dbReference type="VEuPathDB" id="FungiDB:MYCTH_102971"/>
<dbReference type="eggNOG" id="ENOG502QVGN">
    <property type="taxonomic scope" value="Eukaryota"/>
</dbReference>
<dbReference type="HOGENOM" id="CLU_018354_10_1_1"/>
<dbReference type="InParanoid" id="G2QG48"/>
<dbReference type="OMA" id="HDLWWAH"/>
<dbReference type="OrthoDB" id="415825at2759"/>
<dbReference type="Proteomes" id="UP000007322">
    <property type="component" value="Chromosome 4"/>
</dbReference>
<dbReference type="GO" id="GO:0005576">
    <property type="term" value="C:extracellular region"/>
    <property type="evidence" value="ECO:0007669"/>
    <property type="project" value="UniProtKB-SubCell"/>
</dbReference>
<dbReference type="GO" id="GO:0071949">
    <property type="term" value="F:FAD binding"/>
    <property type="evidence" value="ECO:0007669"/>
    <property type="project" value="InterPro"/>
</dbReference>
<dbReference type="GO" id="GO:0016491">
    <property type="term" value="F:oxidoreductase activity"/>
    <property type="evidence" value="ECO:0007669"/>
    <property type="project" value="UniProtKB-KW"/>
</dbReference>
<dbReference type="Gene3D" id="3.30.465.10">
    <property type="match status" value="1"/>
</dbReference>
<dbReference type="Gene3D" id="3.40.462.20">
    <property type="match status" value="1"/>
</dbReference>
<dbReference type="InterPro" id="IPR012951">
    <property type="entry name" value="BBE"/>
</dbReference>
<dbReference type="InterPro" id="IPR016166">
    <property type="entry name" value="FAD-bd_PCMH"/>
</dbReference>
<dbReference type="InterPro" id="IPR036318">
    <property type="entry name" value="FAD-bd_PCMH-like_sf"/>
</dbReference>
<dbReference type="InterPro" id="IPR016169">
    <property type="entry name" value="FAD-bd_PCMH_sub2"/>
</dbReference>
<dbReference type="InterPro" id="IPR050416">
    <property type="entry name" value="FAD-linked_Oxidoreductase"/>
</dbReference>
<dbReference type="InterPro" id="IPR006094">
    <property type="entry name" value="Oxid_FAD_bind_N"/>
</dbReference>
<dbReference type="PANTHER" id="PTHR42973">
    <property type="entry name" value="BINDING OXIDOREDUCTASE, PUTATIVE (AFU_ORTHOLOGUE AFUA_1G17690)-RELATED"/>
    <property type="match status" value="1"/>
</dbReference>
<dbReference type="PANTHER" id="PTHR42973:SF39">
    <property type="entry name" value="FAD-BINDING PCMH-TYPE DOMAIN-CONTAINING PROTEIN"/>
    <property type="match status" value="1"/>
</dbReference>
<dbReference type="Pfam" id="PF08031">
    <property type="entry name" value="BBE"/>
    <property type="match status" value="1"/>
</dbReference>
<dbReference type="Pfam" id="PF01565">
    <property type="entry name" value="FAD_binding_4"/>
    <property type="match status" value="1"/>
</dbReference>
<dbReference type="SUPFAM" id="SSF56176">
    <property type="entry name" value="FAD-binding/transporter-associated domain-like"/>
    <property type="match status" value="1"/>
</dbReference>
<dbReference type="PROSITE" id="PS51387">
    <property type="entry name" value="FAD_PCMH"/>
    <property type="match status" value="1"/>
</dbReference>
<reference key="1">
    <citation type="journal article" date="2011" name="Nat. Biotechnol.">
        <title>Comparative genomic analysis of the thermophilic biomass-degrading fungi Myceliophthora thermophila and Thielavia terrestris.</title>
        <authorList>
            <person name="Berka R.M."/>
            <person name="Grigoriev I.V."/>
            <person name="Otillar R."/>
            <person name="Salamov A."/>
            <person name="Grimwood J."/>
            <person name="Reid I."/>
            <person name="Ishmael N."/>
            <person name="John T."/>
            <person name="Darmond C."/>
            <person name="Moisan M.-C."/>
            <person name="Henrissat B."/>
            <person name="Coutinho P.M."/>
            <person name="Lombard V."/>
            <person name="Natvig D.O."/>
            <person name="Lindquist E."/>
            <person name="Schmutz J."/>
            <person name="Lucas S."/>
            <person name="Harris P."/>
            <person name="Powlowski J."/>
            <person name="Bellemare A."/>
            <person name="Taylor D."/>
            <person name="Butler G."/>
            <person name="de Vries R.P."/>
            <person name="Allijn I.E."/>
            <person name="van den Brink J."/>
            <person name="Ushinsky S."/>
            <person name="Storms R."/>
            <person name="Powell A.J."/>
            <person name="Paulsen I.T."/>
            <person name="Elbourne L.D.H."/>
            <person name="Baker S.E."/>
            <person name="Magnuson J."/>
            <person name="LaBoissiere S."/>
            <person name="Clutterbuck A.J."/>
            <person name="Martinez D."/>
            <person name="Wogulis M."/>
            <person name="de Leon A.L."/>
            <person name="Rey M.W."/>
            <person name="Tsang A."/>
        </authorList>
    </citation>
    <scope>NUCLEOTIDE SEQUENCE [LARGE SCALE GENOMIC DNA]</scope>
    <source>
        <strain>ATCC 42464 / BCRC 31852 / DSM 1799</strain>
    </source>
</reference>
<reference evidence="8 9 10" key="2">
    <citation type="journal article" date="2016" name="J. Biol. Chem.">
        <title>Discovery of a xylooligosaccharide oxidase from Myceliophthora thermophila C1.</title>
        <authorList>
            <person name="Ferrari A.R."/>
            <person name="Rozeboom H.J."/>
            <person name="Dobruchowska J.M."/>
            <person name="van Leeuwen S.S."/>
            <person name="Vugts A.S."/>
            <person name="Koetsier M.J."/>
            <person name="Visser J."/>
            <person name="Fraaije M.W."/>
        </authorList>
    </citation>
    <scope>X-RAY CRYSTALLOGRAPHY (1.79 ANGSTROMS) IN COMPLEX WITH FAD AND SUBSTRATES</scope>
    <scope>DISULFIDE BONDS</scope>
    <scope>GLYCOSYLATION AT ASN-117; ASN-192; ASN-233; ASN-245 AND ASN-289</scope>
    <scope>FUNCTION</scope>
    <scope>CATALYTIC ACTIVITY</scope>
    <scope>BIOPHYSICOCHEMICAL PROPERTIES</scope>
    <scope>SUBCELLULAR LOCATION</scope>
</reference>
<proteinExistence type="evidence at protein level"/>
<protein>
    <recommendedName>
        <fullName evidence="5">Xylooligosaccharide oxidase</fullName>
        <shortName>XOS</shortName>
        <ecNumber evidence="7">1.1.3.-</ecNumber>
    </recommendedName>
</protein>
<name>XYLO_THET4</name>
<organism>
    <name type="scientific">Thermothelomyces thermophilus (strain ATCC 42464 / BCRC 31852 / DSM 1799)</name>
    <name type="common">Sporotrichum thermophile</name>
    <dbReference type="NCBI Taxonomy" id="573729"/>
    <lineage>
        <taxon>Eukaryota</taxon>
        <taxon>Fungi</taxon>
        <taxon>Dikarya</taxon>
        <taxon>Ascomycota</taxon>
        <taxon>Pezizomycotina</taxon>
        <taxon>Sordariomycetes</taxon>
        <taxon>Sordariomycetidae</taxon>
        <taxon>Sordariales</taxon>
        <taxon>Chaetomiaceae</taxon>
        <taxon>Thermothelomyces</taxon>
    </lineage>
</organism>
<accession>G2QG48</accession>
<sequence>MHLLPLTVSATAVVSAASSPHAKRAAIDECLKNAKVPVTARNSTEWKTDASPFNDRLPYTPAAIAKPATVEHIQAAVLCAAEVGVKANPKSGGHSYASFGLGGEDGHLVVELDRMYNVTLDPETHIATVQPGARLGHIATVLYEEGKRAFSHGTCPGVGVGGHSLHGGFGFSSHSHGLAVDWITSADVVLANGSLVTASETENPDLFWALRGAGSNFGIVASFRFKTFAAPPNVTSYEINLPWTNSSNVVKGWGALQEWLLNGGMPEEMNMRVLGNAFQTQLQGLYHGNASALKTAIQPLLALLDANLSSVQEHDWMEGFRHYAYSGEIDITDPGYDQSETFYSKSLVTSALPPDVLERVAEYWIETANKVRRSWYIIIDMYGGPNSAVTRVPPGAGSYAFRDPERHLFLYELYDRSFGPYPDDGFAFLDGWVHAFTGGLDSSDWGMYINYADPGLDRAEAQEVYYRQNLDRLRRIKQQLDPTELFYYPQAVEPAEV</sequence>
<comment type="function">
    <text evidence="4">Catalyzes the selective oxidation of C1 hydroxyl moieties on mono-, oligo- and polysaccharides with concomitant reduction of molecular oxygen to hydrogen peroxide. This results in the formation of the corresponding lactones, which typically undergo spontaneous hydrolysis. Xylooligosaccharide oxidase is able to oxidize a variety of substrates including D-xylose, D-cellobiose, lactose and arabinose. The enzyme acts primarily on xylooligosaccharides, indicating that it prefers pentose-based oligosaccharides over hexose-based oligosaccharides.</text>
</comment>
<comment type="catalytic activity">
    <reaction evidence="4">
        <text>D-xylobiose + O2 = D-xylobiono-1,5-lactone + H2O2</text>
        <dbReference type="Rhea" id="RHEA:59632"/>
        <dbReference type="ChEBI" id="CHEBI:15379"/>
        <dbReference type="ChEBI" id="CHEBI:16240"/>
        <dbReference type="ChEBI" id="CHEBI:28309"/>
        <dbReference type="ChEBI" id="CHEBI:143156"/>
    </reaction>
</comment>
<comment type="catalytic activity">
    <reaction evidence="4">
        <text>D-xylotriose + O2 = D-xylotriono-1,5-lactone + H2O2</text>
        <dbReference type="Rhea" id="RHEA:59636"/>
        <dbReference type="ChEBI" id="CHEBI:15379"/>
        <dbReference type="ChEBI" id="CHEBI:16240"/>
        <dbReference type="ChEBI" id="CHEBI:62783"/>
        <dbReference type="ChEBI" id="CHEBI:143164"/>
    </reaction>
</comment>
<comment type="catalytic activity">
    <reaction evidence="4">
        <text>D-xylotetraose + O2 = D-xylotetraono-1,5-lactone + H2O2</text>
        <dbReference type="Rhea" id="RHEA:59640"/>
        <dbReference type="ChEBI" id="CHEBI:15379"/>
        <dbReference type="ChEBI" id="CHEBI:16240"/>
        <dbReference type="ChEBI" id="CHEBI:62972"/>
        <dbReference type="ChEBI" id="CHEBI:143165"/>
    </reaction>
</comment>
<comment type="cofactor">
    <cofactor evidence="4">
        <name>FAD</name>
        <dbReference type="ChEBI" id="CHEBI:57692"/>
    </cofactor>
    <text evidence="4">Binds 1 FAD per subunit in a bicovalent manner.</text>
</comment>
<comment type="biophysicochemical properties">
    <kinetics>
        <KM evidence="4">0.13 mM for oxygen</KM>
        <KM evidence="4">342 mM for cellobiose</KM>
        <KM evidence="4">532 mM for lactose</KM>
        <KM evidence="4">359 mM for xylose</KM>
        <KM evidence="4">1.15 mM for xylobiose</KM>
        <KM evidence="4">0.69 mM for xylotriose</KM>
        <KM evidence="4">0.43 mM for xylotetraose</KM>
    </kinetics>
    <phDependence>
        <text evidence="4">Optimum pH is 7.</text>
    </phDependence>
    <temperatureDependence>
        <text evidence="4">Optimum temperature is 30 degrees Celsius. Stable up to 60 degrees Celsius.</text>
    </temperatureDependence>
</comment>
<comment type="subcellular location">
    <subcellularLocation>
        <location evidence="4">Secreted</location>
    </subcellularLocation>
</comment>
<comment type="PTM">
    <text evidence="4">The FAD cofactor is bound via a bicovalent 6-S-cysteinyl, 8alpha-N1-histidyl FAD linkage.</text>
</comment>
<comment type="similarity">
    <text evidence="6">Belongs to the oxygen-dependent FAD-linked oxidoreductase family.</text>
</comment>
<gene>
    <name evidence="5" type="primary">xylO</name>
    <name type="ORF">MYCTH_102971</name>
</gene>
<evidence type="ECO:0000255" key="1"/>
<evidence type="ECO:0000255" key="2">
    <source>
        <dbReference type="PROSITE-ProRule" id="PRU00498"/>
    </source>
</evidence>
<evidence type="ECO:0000255" key="3">
    <source>
        <dbReference type="PROSITE-ProRule" id="PRU00718"/>
    </source>
</evidence>
<evidence type="ECO:0000269" key="4">
    <source>
    </source>
</evidence>
<evidence type="ECO:0000303" key="5">
    <source>
    </source>
</evidence>
<evidence type="ECO:0000305" key="6"/>
<evidence type="ECO:0000305" key="7">
    <source>
    </source>
</evidence>
<evidence type="ECO:0007744" key="8">
    <source>
        <dbReference type="PDB" id="5K8E"/>
    </source>
</evidence>
<evidence type="ECO:0007744" key="9">
    <source>
        <dbReference type="PDB" id="5L6F"/>
    </source>
</evidence>
<evidence type="ECO:0007744" key="10">
    <source>
        <dbReference type="PDB" id="5L6G"/>
    </source>
</evidence>
<evidence type="ECO:0007829" key="11">
    <source>
        <dbReference type="PDB" id="5L6G"/>
    </source>
</evidence>